<reference key="1">
    <citation type="journal article" date="2004" name="Proc. Natl. Acad. Sci. U.S.A.">
        <title>The complete genomic sequence of Nocardia farcinica IFM 10152.</title>
        <authorList>
            <person name="Ishikawa J."/>
            <person name="Yamashita A."/>
            <person name="Mikami Y."/>
            <person name="Hoshino Y."/>
            <person name="Kurita H."/>
            <person name="Hotta K."/>
            <person name="Shiba T."/>
            <person name="Hattori M."/>
        </authorList>
    </citation>
    <scope>NUCLEOTIDE SEQUENCE [LARGE SCALE GENOMIC DNA]</scope>
    <source>
        <strain>IFM 10152</strain>
    </source>
</reference>
<comment type="function">
    <text evidence="1">The glycine cleavage system catalyzes the degradation of glycine. The P protein binds the alpha-amino group of glycine through its pyridoxal phosphate cofactor; CO(2) is released and the remaining methylamine moiety is then transferred to the lipoamide cofactor of the H protein.</text>
</comment>
<comment type="catalytic activity">
    <reaction evidence="1">
        <text>N(6)-[(R)-lipoyl]-L-lysyl-[glycine-cleavage complex H protein] + glycine + H(+) = N(6)-[(R)-S(8)-aminomethyldihydrolipoyl]-L-lysyl-[glycine-cleavage complex H protein] + CO2</text>
        <dbReference type="Rhea" id="RHEA:24304"/>
        <dbReference type="Rhea" id="RHEA-COMP:10494"/>
        <dbReference type="Rhea" id="RHEA-COMP:10495"/>
        <dbReference type="ChEBI" id="CHEBI:15378"/>
        <dbReference type="ChEBI" id="CHEBI:16526"/>
        <dbReference type="ChEBI" id="CHEBI:57305"/>
        <dbReference type="ChEBI" id="CHEBI:83099"/>
        <dbReference type="ChEBI" id="CHEBI:83143"/>
        <dbReference type="EC" id="1.4.4.2"/>
    </reaction>
</comment>
<comment type="cofactor">
    <cofactor evidence="1">
        <name>pyridoxal 5'-phosphate</name>
        <dbReference type="ChEBI" id="CHEBI:597326"/>
    </cofactor>
</comment>
<comment type="subunit">
    <text evidence="1">The glycine cleavage system is composed of four proteins: P, T, L and H.</text>
</comment>
<comment type="similarity">
    <text evidence="1">Belongs to the GcvP family.</text>
</comment>
<sequence>MTRSFADRHIGPDAAELSRILEVVGVDSLDALAAAALPASILDDAGAGPLAALPPAVSEHEALAELAALAQSNTVTTSMIGLGYYDTLTPPVLVRNLLENPAWYTAYTPYQPEISQGRLEALLNFQTMVSDLTGMEVANASMLDEATAAAEAMTLLRRAGRSRSNRLLIDADLFPQTRTVLHTRAEPLGIEIVEADLAAAGLPEGGFFGVIVQVPGASGRVVDWTALIAAAHERGALVAAGADLLAMTLIVPPGEQGADVCFGTTQRFGVPMGFGGPHAGYLAVRSAHARQLPGRLVGVSKDADGNPAYRLALQTREQHIRREKATSNICTAQVLLAIVAAMYACYHGADGLRAIARRVHGHAARIAGALGEALVHDTYFDTVLARVPGHAEAVVAKAAACGITLRLVDPDHVAVACDEATTDAHVEAVLDAFGVAPAEPVDAGIATRTSEFLTHPAFTRYRTETAMLRYLRSLSDKDIALDRSMIPLGSCTMKLNATAEMEPITWPGFAKLHPYAPVEHAPGLLKLIGDLESWLAEITGYDAVSLQPNAGSQGEYAGLLAIRRYHLDRGDTHRDTCLIPSSAHGTNAASAAMAGLRVEVVKCRENGDVDLDDLRAKITDHAERLACIMITYPSTHGVYEHEIAELCALVHDAGGQVYVDGANLNALVGLARPGRFGGDVSHLNLHKTFCIPHGGGGPGVGPVAVRAHLAQYLPGDPLESGSHAVSAARYGSASILPITWAYIRMMGAEGLRKATLTAIASANYLARRLDEYFPVLYTGENGMVAHECILDLRELTKRTGVTVDDVAKRLADYGFHAPTMSFPVAGTLMVEPTESENLAELDEFVAAMIAIRAEIDQVGAGVWPAEDNPLRGAPHTAECLVGEWTHPYSREIAVYPRGLGHARAKVWPAVRRIDGAYGDRNLVCSCPPLEAYAE</sequence>
<keyword id="KW-0560">Oxidoreductase</keyword>
<keyword id="KW-0663">Pyridoxal phosphate</keyword>
<keyword id="KW-1185">Reference proteome</keyword>
<name>GCSP_NOCFA</name>
<accession>Q5YWV4</accession>
<feature type="chain" id="PRO_0000227110" description="Glycine dehydrogenase (decarboxylating)">
    <location>
        <begin position="1"/>
        <end position="934"/>
    </location>
</feature>
<feature type="modified residue" description="N6-(pyridoxal phosphate)lysine" evidence="1">
    <location>
        <position position="687"/>
    </location>
</feature>
<organism>
    <name type="scientific">Nocardia farcinica (strain IFM 10152)</name>
    <dbReference type="NCBI Taxonomy" id="247156"/>
    <lineage>
        <taxon>Bacteria</taxon>
        <taxon>Bacillati</taxon>
        <taxon>Actinomycetota</taxon>
        <taxon>Actinomycetes</taxon>
        <taxon>Mycobacteriales</taxon>
        <taxon>Nocardiaceae</taxon>
        <taxon>Nocardia</taxon>
    </lineage>
</organism>
<gene>
    <name evidence="1" type="primary">gcvP</name>
    <name type="ordered locus">NFA_24900</name>
</gene>
<proteinExistence type="inferred from homology"/>
<evidence type="ECO:0000255" key="1">
    <source>
        <dbReference type="HAMAP-Rule" id="MF_00711"/>
    </source>
</evidence>
<dbReference type="EC" id="1.4.4.2" evidence="1"/>
<dbReference type="EMBL" id="AP006618">
    <property type="protein sequence ID" value="BAD57337.1"/>
    <property type="molecule type" value="Genomic_DNA"/>
</dbReference>
<dbReference type="RefSeq" id="WP_011209022.1">
    <property type="nucleotide sequence ID" value="NC_006361.1"/>
</dbReference>
<dbReference type="SMR" id="Q5YWV4"/>
<dbReference type="STRING" id="247156.NFA_24900"/>
<dbReference type="GeneID" id="61133238"/>
<dbReference type="KEGG" id="nfa:NFA_24900"/>
<dbReference type="eggNOG" id="COG0403">
    <property type="taxonomic scope" value="Bacteria"/>
</dbReference>
<dbReference type="eggNOG" id="COG1003">
    <property type="taxonomic scope" value="Bacteria"/>
</dbReference>
<dbReference type="HOGENOM" id="CLU_004620_2_1_11"/>
<dbReference type="OrthoDB" id="9801272at2"/>
<dbReference type="Proteomes" id="UP000006820">
    <property type="component" value="Chromosome"/>
</dbReference>
<dbReference type="GO" id="GO:0005829">
    <property type="term" value="C:cytosol"/>
    <property type="evidence" value="ECO:0007669"/>
    <property type="project" value="TreeGrafter"/>
</dbReference>
<dbReference type="GO" id="GO:0005960">
    <property type="term" value="C:glycine cleavage complex"/>
    <property type="evidence" value="ECO:0007669"/>
    <property type="project" value="TreeGrafter"/>
</dbReference>
<dbReference type="GO" id="GO:0016594">
    <property type="term" value="F:glycine binding"/>
    <property type="evidence" value="ECO:0007669"/>
    <property type="project" value="TreeGrafter"/>
</dbReference>
<dbReference type="GO" id="GO:0004375">
    <property type="term" value="F:glycine dehydrogenase (decarboxylating) activity"/>
    <property type="evidence" value="ECO:0007669"/>
    <property type="project" value="UniProtKB-EC"/>
</dbReference>
<dbReference type="GO" id="GO:0030170">
    <property type="term" value="F:pyridoxal phosphate binding"/>
    <property type="evidence" value="ECO:0007669"/>
    <property type="project" value="TreeGrafter"/>
</dbReference>
<dbReference type="GO" id="GO:0019464">
    <property type="term" value="P:glycine decarboxylation via glycine cleavage system"/>
    <property type="evidence" value="ECO:0007669"/>
    <property type="project" value="UniProtKB-UniRule"/>
</dbReference>
<dbReference type="CDD" id="cd00613">
    <property type="entry name" value="GDC-P"/>
    <property type="match status" value="2"/>
</dbReference>
<dbReference type="FunFam" id="3.40.640.10:FF:000005">
    <property type="entry name" value="Glycine dehydrogenase (decarboxylating), mitochondrial"/>
    <property type="match status" value="1"/>
</dbReference>
<dbReference type="FunFam" id="3.40.640.10:FF:000007">
    <property type="entry name" value="glycine dehydrogenase (Decarboxylating), mitochondrial"/>
    <property type="match status" value="1"/>
</dbReference>
<dbReference type="Gene3D" id="3.90.1150.10">
    <property type="entry name" value="Aspartate Aminotransferase, domain 1"/>
    <property type="match status" value="2"/>
</dbReference>
<dbReference type="Gene3D" id="3.40.640.10">
    <property type="entry name" value="Type I PLP-dependent aspartate aminotransferase-like (Major domain)"/>
    <property type="match status" value="2"/>
</dbReference>
<dbReference type="HAMAP" id="MF_00711">
    <property type="entry name" value="GcvP"/>
    <property type="match status" value="1"/>
</dbReference>
<dbReference type="InterPro" id="IPR003437">
    <property type="entry name" value="GcvP"/>
</dbReference>
<dbReference type="InterPro" id="IPR049316">
    <property type="entry name" value="GDC-P_C"/>
</dbReference>
<dbReference type="InterPro" id="IPR049315">
    <property type="entry name" value="GDC-P_N"/>
</dbReference>
<dbReference type="InterPro" id="IPR020581">
    <property type="entry name" value="GDC_P"/>
</dbReference>
<dbReference type="InterPro" id="IPR015424">
    <property type="entry name" value="PyrdxlP-dep_Trfase"/>
</dbReference>
<dbReference type="InterPro" id="IPR015421">
    <property type="entry name" value="PyrdxlP-dep_Trfase_major"/>
</dbReference>
<dbReference type="InterPro" id="IPR015422">
    <property type="entry name" value="PyrdxlP-dep_Trfase_small"/>
</dbReference>
<dbReference type="NCBIfam" id="TIGR00461">
    <property type="entry name" value="gcvP"/>
    <property type="match status" value="1"/>
</dbReference>
<dbReference type="NCBIfam" id="NF003346">
    <property type="entry name" value="PRK04366.1"/>
    <property type="match status" value="1"/>
</dbReference>
<dbReference type="PANTHER" id="PTHR11773:SF1">
    <property type="entry name" value="GLYCINE DEHYDROGENASE (DECARBOXYLATING), MITOCHONDRIAL"/>
    <property type="match status" value="1"/>
</dbReference>
<dbReference type="PANTHER" id="PTHR11773">
    <property type="entry name" value="GLYCINE DEHYDROGENASE, DECARBOXYLATING"/>
    <property type="match status" value="1"/>
</dbReference>
<dbReference type="Pfam" id="PF21478">
    <property type="entry name" value="GcvP2_C"/>
    <property type="match status" value="1"/>
</dbReference>
<dbReference type="Pfam" id="PF02347">
    <property type="entry name" value="GDC-P"/>
    <property type="match status" value="2"/>
</dbReference>
<dbReference type="SUPFAM" id="SSF53383">
    <property type="entry name" value="PLP-dependent transferases"/>
    <property type="match status" value="2"/>
</dbReference>
<protein>
    <recommendedName>
        <fullName evidence="1">Glycine dehydrogenase (decarboxylating)</fullName>
        <ecNumber evidence="1">1.4.4.2</ecNumber>
    </recommendedName>
    <alternativeName>
        <fullName evidence="1">Glycine cleavage system P-protein</fullName>
    </alternativeName>
    <alternativeName>
        <fullName evidence="1">Glycine decarboxylase</fullName>
    </alternativeName>
    <alternativeName>
        <fullName evidence="1">Glycine dehydrogenase (aminomethyl-transferring)</fullName>
    </alternativeName>
</protein>